<comment type="function">
    <text evidence="2 4">Pore-forming, alpha-1S subunit of the voltage-gated calcium channel that gives rise to L-type calcium currents in skeletal muscle. Calcium channels containing the alpha-1S subunit play an important role in excitation-contraction coupling in skeletal muscle via their interaction with RYR1, which triggers Ca(2+) release from the sarcplasmic reticulum and ultimately results in muscle contraction. Long-lasting (L-type) calcium channels belong to the 'high-voltage activated' (HVA) group.</text>
</comment>
<comment type="catalytic activity">
    <reaction evidence="4">
        <text>Ca(2+)(in) = Ca(2+)(out)</text>
        <dbReference type="Rhea" id="RHEA:29671"/>
        <dbReference type="ChEBI" id="CHEBI:29108"/>
    </reaction>
</comment>
<comment type="activity regulation">
    <text evidence="2 6">Channel activity is blocked by dihydropyridines (DHP), phenylalkylamines, and by benzothiazepines.</text>
</comment>
<comment type="subunit">
    <text evidence="2 3 4">Component of a calcium channel complex consisting of a pore-forming alpha subunit (CACNA1S) and the ancillary subunits CACNB1 or CACNB2, CACNG1 and CACNA2D1. The channel complex contains alpha, beta, gamma and delta subunits in a 1:1:1:1 ratio, i.e. it contains either CACNB1 or CACNB2 (By similarity). CACNA1S channel activity is modulated by the auxiliary subunits (CACNB1 or CACNB2, CACNG1 and CACNA2D1). Interacts with DYSF and JSRP1 (By similarity). Interacts with RYR1 (By similarity). Interacts with CALM (By similarity).</text>
</comment>
<comment type="subcellular location">
    <subcellularLocation>
        <location evidence="2">Cell membrane</location>
        <location evidence="2">Sarcolemma</location>
        <location evidence="2">T-tubule</location>
        <topology evidence="2">Multi-pass membrane protein</topology>
    </subcellularLocation>
</comment>
<comment type="domain">
    <text evidence="2">Each of the four internal repeats contains five hydrophobic transmembrane segments (S1, S2, S3, S5, S6) and one positively charged transmembrane segment (S4). S4 segments probably represent the voltage-sensor and are characterized by a series of positively charged amino acids at every third position.</text>
</comment>
<comment type="domain">
    <text evidence="2">The loop between repeats II and III interacts with the ryanodine receptor, and is therefore important for calcium release from the endoplasmic reticulum necessary for muscle contraction.</text>
</comment>
<comment type="PTM">
    <text evidence="2">The alpha-1S subunit is found in two isoforms in the skeletal muscle: a minor form of 212 kDa containing the complete amino acid sequence, and a major form of 190 kDa derived from the full-length form by post-translational proteolysis close to Phe-1690.</text>
</comment>
<comment type="PTM">
    <text evidence="2">Both the minor and major forms are phosphorylated in vitro by PKA. Phosphorylation by PKA activates the calcium channel.</text>
</comment>
<comment type="similarity">
    <text evidence="6">Belongs to the calcium channel alpha-1 subunit (TC 1.A.1.11) family. CACNA1S subfamily.</text>
</comment>
<name>CAC1S_CHICK</name>
<gene>
    <name type="primary">CACNA1S</name>
</gene>
<organism>
    <name type="scientific">Gallus gallus</name>
    <name type="common">Chicken</name>
    <dbReference type="NCBI Taxonomy" id="9031"/>
    <lineage>
        <taxon>Eukaryota</taxon>
        <taxon>Metazoa</taxon>
        <taxon>Chordata</taxon>
        <taxon>Craniata</taxon>
        <taxon>Vertebrata</taxon>
        <taxon>Euteleostomi</taxon>
        <taxon>Archelosauria</taxon>
        <taxon>Archosauria</taxon>
        <taxon>Dinosauria</taxon>
        <taxon>Saurischia</taxon>
        <taxon>Theropoda</taxon>
        <taxon>Coelurosauria</taxon>
        <taxon>Aves</taxon>
        <taxon>Neognathae</taxon>
        <taxon>Galloanserae</taxon>
        <taxon>Galliformes</taxon>
        <taxon>Phasianidae</taxon>
        <taxon>Phasianinae</taxon>
        <taxon>Gallus</taxon>
    </lineage>
</organism>
<feature type="chain" id="PRO_0000053947" description="Voltage-dependent L-type calcium channel subunit alpha-1S">
    <location>
        <begin position="1" status="less than"/>
        <end position="281" status="greater than"/>
    </location>
</feature>
<feature type="transmembrane region" description="Helical; Name=S1 of repeat IV" evidence="2">
    <location>
        <begin position="59"/>
        <end position="80"/>
    </location>
</feature>
<feature type="transmembrane region" description="Helical; Name=S2 of repeat IV" evidence="2">
    <location>
        <begin position="89"/>
        <end position="110"/>
    </location>
</feature>
<feature type="transmembrane region" description="Helical; Name=S3 of repeat IV" evidence="2">
    <location>
        <begin position="121"/>
        <end position="140"/>
    </location>
</feature>
<feature type="transmembrane region" description="Helical; Name=S4 of repeat IV" evidence="2">
    <location>
        <begin position="153"/>
        <end position="171"/>
    </location>
</feature>
<feature type="transmembrane region" description="Helical; Name=S5 of repeat IV" evidence="2">
    <location>
        <begin position="190"/>
        <end position="210"/>
    </location>
</feature>
<feature type="intramembrane region" description="Pore-forming" evidence="2">
    <location>
        <begin position="233"/>
        <end position="251"/>
    </location>
</feature>
<feature type="repeat" description="III">
    <location>
        <begin position="1" status="less than"/>
        <end position="8"/>
    </location>
</feature>
<feature type="repeat" description="IV">
    <location>
        <begin position="45"/>
        <end position="281" status="greater than"/>
    </location>
</feature>
<feature type="region of interest" description="Dihydropyridine binding" evidence="1">
    <location>
        <begin position="1" status="less than"/>
        <end position="17"/>
    </location>
</feature>
<feature type="region of interest" description="Dihydropyridine binding" evidence="1">
    <location>
        <begin position="258"/>
        <end position="281" status="greater than"/>
    </location>
</feature>
<feature type="region of interest" description="Phenylalkylamine binding" evidence="1">
    <location>
        <begin position="270"/>
        <end position="281" status="greater than"/>
    </location>
</feature>
<feature type="short sequence motif" description="Selectivity filter of repeat IV" evidence="2">
    <location>
        <begin position="242"/>
        <end position="245"/>
    </location>
</feature>
<feature type="glycosylation site" description="N-linked (GlcNAc...) asparagine" evidence="5">
    <location>
        <position position="81"/>
    </location>
</feature>
<feature type="disulfide bond" evidence="2">
    <location>
        <begin position="259"/>
        <end position="273"/>
    </location>
</feature>
<feature type="non-terminal residue">
    <location>
        <position position="1"/>
    </location>
</feature>
<feature type="non-terminal residue">
    <location>
        <position position="281"/>
    </location>
</feature>
<reference key="1">
    <citation type="submission" date="1997-06" db="EMBL/GenBank/DDBJ databases">
        <title>Molecular characterization of an L-type calcium channel in chick intestinal epithelia cells.</title>
        <authorList>
            <person name="Xu J."/>
            <person name="Norman A.W."/>
            <person name="Henry H.L."/>
            <person name="de Boland A.R."/>
            <person name="Zanello L.P."/>
        </authorList>
    </citation>
    <scope>NUCLEOTIDE SEQUENCE [MRNA]</scope>
    <source>
        <strain>White leghorn</strain>
        <tissue>Intestinal epithelium</tissue>
    </source>
</reference>
<proteinExistence type="evidence at transcript level"/>
<protein>
    <recommendedName>
        <fullName>Voltage-dependent L-type calcium channel subunit alpha-1S</fullName>
    </recommendedName>
    <alternativeName>
        <fullName>Voltage-gated calcium channel subunit alpha Cav1.1</fullName>
    </alternativeName>
</protein>
<evidence type="ECO:0000250" key="1"/>
<evidence type="ECO:0000250" key="2">
    <source>
        <dbReference type="UniProtKB" id="P07293"/>
    </source>
</evidence>
<evidence type="ECO:0000250" key="3">
    <source>
        <dbReference type="UniProtKB" id="Q02789"/>
    </source>
</evidence>
<evidence type="ECO:0000250" key="4">
    <source>
        <dbReference type="UniProtKB" id="Q13698"/>
    </source>
</evidence>
<evidence type="ECO:0000255" key="5"/>
<evidence type="ECO:0000305" key="6"/>
<keyword id="KW-0106">Calcium</keyword>
<keyword id="KW-0107">Calcium channel</keyword>
<keyword id="KW-0109">Calcium transport</keyword>
<keyword id="KW-0112">Calmodulin-binding</keyword>
<keyword id="KW-1003">Cell membrane</keyword>
<keyword id="KW-1015">Disulfide bond</keyword>
<keyword id="KW-0325">Glycoprotein</keyword>
<keyword id="KW-0407">Ion channel</keyword>
<keyword id="KW-0406">Ion transport</keyword>
<keyword id="KW-0472">Membrane</keyword>
<keyword id="KW-0597">Phosphoprotein</keyword>
<keyword id="KW-1185">Reference proteome</keyword>
<keyword id="KW-0677">Repeat</keyword>
<keyword id="KW-0812">Transmembrane</keyword>
<keyword id="KW-1133">Transmembrane helix</keyword>
<keyword id="KW-0813">Transport</keyword>
<keyword id="KW-0851">Voltage-gated channel</keyword>
<sequence>VGFVIVTFQEQGESEYKNCELDKNQRQCVQYALKARPLRRYIPKNPYQYQIWYVVTSSYFEYLMFFLIMLNTICLGMQHYNQSAEMNHVSDILNVAFTVLFTLEMILKLMAFKAKGYFGDPWNVFDFLIVIGSIIDVILSEIDDPDDNSRVSITFFRLFRVMRLVKLLSRGEGVRTLLWTFIKSFQALPYVALLIVMLFFIYAVIGMQMFGKIAMVDGTQINRNNNFQTFPQAVLLLFRCATGEAWQEILLDCSYGKRCDPESDYAEGEEYTCGTGFAYFY</sequence>
<accession>O42398</accession>
<dbReference type="EMBL" id="AF007877">
    <property type="protein sequence ID" value="AAB63206.1"/>
    <property type="molecule type" value="mRNA"/>
</dbReference>
<dbReference type="SMR" id="O42398"/>
<dbReference type="STRING" id="9031.ENSGALP00000056760"/>
<dbReference type="GlyCosmos" id="O42398">
    <property type="glycosylation" value="1 site, No reported glycans"/>
</dbReference>
<dbReference type="GlyGen" id="O42398">
    <property type="glycosylation" value="1 site"/>
</dbReference>
<dbReference type="PaxDb" id="9031-ENSGALP00000001033"/>
<dbReference type="VEuPathDB" id="HostDB:geneid_395985"/>
<dbReference type="eggNOG" id="KOG2301">
    <property type="taxonomic scope" value="Eukaryota"/>
</dbReference>
<dbReference type="InParanoid" id="O42398"/>
<dbReference type="OrthoDB" id="431720at2759"/>
<dbReference type="PhylomeDB" id="O42398"/>
<dbReference type="Proteomes" id="UP000000539">
    <property type="component" value="Unassembled WGS sequence"/>
</dbReference>
<dbReference type="GO" id="GO:1990454">
    <property type="term" value="C:L-type voltage-gated calcium channel complex"/>
    <property type="evidence" value="ECO:0000250"/>
    <property type="project" value="UniProtKB"/>
</dbReference>
<dbReference type="GO" id="GO:0030315">
    <property type="term" value="C:T-tubule"/>
    <property type="evidence" value="ECO:0000250"/>
    <property type="project" value="UniProtKB"/>
</dbReference>
<dbReference type="GO" id="GO:0005516">
    <property type="term" value="F:calmodulin binding"/>
    <property type="evidence" value="ECO:0007669"/>
    <property type="project" value="UniProtKB-KW"/>
</dbReference>
<dbReference type="GO" id="GO:0005245">
    <property type="term" value="F:voltage-gated calcium channel activity"/>
    <property type="evidence" value="ECO:0000250"/>
    <property type="project" value="UniProtKB"/>
</dbReference>
<dbReference type="GO" id="GO:0070588">
    <property type="term" value="P:calcium ion transmembrane transport"/>
    <property type="evidence" value="ECO:0000250"/>
    <property type="project" value="UniProtKB"/>
</dbReference>
<dbReference type="GO" id="GO:0071313">
    <property type="term" value="P:cellular response to caffeine"/>
    <property type="evidence" value="ECO:0000250"/>
    <property type="project" value="UniProtKB"/>
</dbReference>
<dbReference type="GO" id="GO:0006936">
    <property type="term" value="P:muscle contraction"/>
    <property type="evidence" value="ECO:0000250"/>
    <property type="project" value="UniProtKB"/>
</dbReference>
<dbReference type="GO" id="GO:0051209">
    <property type="term" value="P:release of sequestered calcium ion into cytosol"/>
    <property type="evidence" value="ECO:0000250"/>
    <property type="project" value="UniProtKB"/>
</dbReference>
<dbReference type="FunFam" id="1.10.287.70:FF:000187">
    <property type="entry name" value="Voltage-dependent L-type calcium channel subunit alpha"/>
    <property type="match status" value="1"/>
</dbReference>
<dbReference type="FunFam" id="1.20.120.350:FF:000040">
    <property type="entry name" value="Voltage-dependent L-type calcium channel subunit alpha"/>
    <property type="match status" value="1"/>
</dbReference>
<dbReference type="Gene3D" id="1.10.287.70">
    <property type="match status" value="1"/>
</dbReference>
<dbReference type="Gene3D" id="1.20.120.350">
    <property type="entry name" value="Voltage-gated potassium channels. Chain C"/>
    <property type="match status" value="1"/>
</dbReference>
<dbReference type="InterPro" id="IPR005821">
    <property type="entry name" value="Ion_trans_dom"/>
</dbReference>
<dbReference type="InterPro" id="IPR050599">
    <property type="entry name" value="VDCC_alpha-1_subunit"/>
</dbReference>
<dbReference type="InterPro" id="IPR002077">
    <property type="entry name" value="VDCCAlpha1"/>
</dbReference>
<dbReference type="InterPro" id="IPR027359">
    <property type="entry name" value="Volt_channel_dom_sf"/>
</dbReference>
<dbReference type="PANTHER" id="PTHR45628">
    <property type="entry name" value="VOLTAGE-DEPENDENT CALCIUM CHANNEL TYPE A SUBUNIT ALPHA-1"/>
    <property type="match status" value="1"/>
</dbReference>
<dbReference type="PANTHER" id="PTHR45628:SF9">
    <property type="entry name" value="VOLTAGE-DEPENDENT L-TYPE CALCIUM CHANNEL SUBUNIT ALPHA-1S"/>
    <property type="match status" value="1"/>
</dbReference>
<dbReference type="Pfam" id="PF00520">
    <property type="entry name" value="Ion_trans"/>
    <property type="match status" value="1"/>
</dbReference>
<dbReference type="PRINTS" id="PR00167">
    <property type="entry name" value="CACHANNEL"/>
</dbReference>
<dbReference type="SUPFAM" id="SSF81324">
    <property type="entry name" value="Voltage-gated potassium channels"/>
    <property type="match status" value="1"/>
</dbReference>